<evidence type="ECO:0000255" key="1">
    <source>
        <dbReference type="HAMAP-Rule" id="MF_01820"/>
    </source>
</evidence>
<evidence type="ECO:0000255" key="2">
    <source>
        <dbReference type="PROSITE-ProRule" id="PRU01058"/>
    </source>
</evidence>
<gene>
    <name evidence="1" type="primary">rsgA</name>
    <name type="ordered locus">CLB_2376</name>
</gene>
<dbReference type="EC" id="3.6.1.-" evidence="1"/>
<dbReference type="EMBL" id="CP000726">
    <property type="protein sequence ID" value="ABS34981.1"/>
    <property type="molecule type" value="Genomic_DNA"/>
</dbReference>
<dbReference type="RefSeq" id="WP_011986840.1">
    <property type="nucleotide sequence ID" value="NC_009697.1"/>
</dbReference>
<dbReference type="SMR" id="A7FW69"/>
<dbReference type="GeneID" id="5186758"/>
<dbReference type="KEGG" id="cba:CLB_2376"/>
<dbReference type="HOGENOM" id="CLU_033617_2_1_9"/>
<dbReference type="GO" id="GO:0005737">
    <property type="term" value="C:cytoplasm"/>
    <property type="evidence" value="ECO:0007669"/>
    <property type="project" value="UniProtKB-SubCell"/>
</dbReference>
<dbReference type="GO" id="GO:0005525">
    <property type="term" value="F:GTP binding"/>
    <property type="evidence" value="ECO:0007669"/>
    <property type="project" value="UniProtKB-UniRule"/>
</dbReference>
<dbReference type="GO" id="GO:0003924">
    <property type="term" value="F:GTPase activity"/>
    <property type="evidence" value="ECO:0007669"/>
    <property type="project" value="UniProtKB-UniRule"/>
</dbReference>
<dbReference type="GO" id="GO:0046872">
    <property type="term" value="F:metal ion binding"/>
    <property type="evidence" value="ECO:0007669"/>
    <property type="project" value="UniProtKB-KW"/>
</dbReference>
<dbReference type="GO" id="GO:0019843">
    <property type="term" value="F:rRNA binding"/>
    <property type="evidence" value="ECO:0007669"/>
    <property type="project" value="UniProtKB-KW"/>
</dbReference>
<dbReference type="GO" id="GO:0042274">
    <property type="term" value="P:ribosomal small subunit biogenesis"/>
    <property type="evidence" value="ECO:0007669"/>
    <property type="project" value="UniProtKB-UniRule"/>
</dbReference>
<dbReference type="CDD" id="cd04466">
    <property type="entry name" value="S1_YloQ_GTPase"/>
    <property type="match status" value="1"/>
</dbReference>
<dbReference type="CDD" id="cd01854">
    <property type="entry name" value="YjeQ_EngC"/>
    <property type="match status" value="1"/>
</dbReference>
<dbReference type="Gene3D" id="2.40.50.140">
    <property type="entry name" value="Nucleic acid-binding proteins"/>
    <property type="match status" value="1"/>
</dbReference>
<dbReference type="Gene3D" id="3.40.50.300">
    <property type="entry name" value="P-loop containing nucleotide triphosphate hydrolases"/>
    <property type="match status" value="1"/>
</dbReference>
<dbReference type="Gene3D" id="1.10.40.50">
    <property type="entry name" value="Probable gtpase engc, domain 3"/>
    <property type="match status" value="1"/>
</dbReference>
<dbReference type="HAMAP" id="MF_01820">
    <property type="entry name" value="GTPase_RsgA"/>
    <property type="match status" value="1"/>
</dbReference>
<dbReference type="InterPro" id="IPR030378">
    <property type="entry name" value="G_CP_dom"/>
</dbReference>
<dbReference type="InterPro" id="IPR012340">
    <property type="entry name" value="NA-bd_OB-fold"/>
</dbReference>
<dbReference type="InterPro" id="IPR027417">
    <property type="entry name" value="P-loop_NTPase"/>
</dbReference>
<dbReference type="InterPro" id="IPR004881">
    <property type="entry name" value="Ribosome_biogen_GTPase_RsgA"/>
</dbReference>
<dbReference type="InterPro" id="IPR010914">
    <property type="entry name" value="RsgA_GTPase_dom"/>
</dbReference>
<dbReference type="InterPro" id="IPR031944">
    <property type="entry name" value="RsgA_N"/>
</dbReference>
<dbReference type="NCBIfam" id="TIGR00157">
    <property type="entry name" value="ribosome small subunit-dependent GTPase A"/>
    <property type="match status" value="1"/>
</dbReference>
<dbReference type="PANTHER" id="PTHR32120">
    <property type="entry name" value="SMALL RIBOSOMAL SUBUNIT BIOGENESIS GTPASE RSGA"/>
    <property type="match status" value="1"/>
</dbReference>
<dbReference type="PANTHER" id="PTHR32120:SF11">
    <property type="entry name" value="SMALL RIBOSOMAL SUBUNIT BIOGENESIS GTPASE RSGA 1, MITOCHONDRIAL-RELATED"/>
    <property type="match status" value="1"/>
</dbReference>
<dbReference type="Pfam" id="PF03193">
    <property type="entry name" value="RsgA_GTPase"/>
    <property type="match status" value="1"/>
</dbReference>
<dbReference type="Pfam" id="PF16745">
    <property type="entry name" value="RsgA_N"/>
    <property type="match status" value="1"/>
</dbReference>
<dbReference type="SUPFAM" id="SSF50249">
    <property type="entry name" value="Nucleic acid-binding proteins"/>
    <property type="match status" value="1"/>
</dbReference>
<dbReference type="SUPFAM" id="SSF52540">
    <property type="entry name" value="P-loop containing nucleoside triphosphate hydrolases"/>
    <property type="match status" value="1"/>
</dbReference>
<dbReference type="PROSITE" id="PS50936">
    <property type="entry name" value="ENGC_GTPASE"/>
    <property type="match status" value="1"/>
</dbReference>
<dbReference type="PROSITE" id="PS51721">
    <property type="entry name" value="G_CP"/>
    <property type="match status" value="1"/>
</dbReference>
<sequence length="292" mass="33764">MKGTIIKGIGGFYYIKIDNSEEIIECKARGKFRHTELTPMIGDYVEISIDKNNKGAIEKIYERRSELFRPAVANVTQALVVFSFKNPDINIDLLNKFLLLCEYNNLKAIVCFNKMDLVNKEDYKDIISMIEQAGYDIIFLNAKEERNMDIIKKLIKDNVTVFCGPSGVGKSTMLNKIIGKETMITGNISEKLKRGKHTTRHSELIYVDEGLLVDTPGFSSLDINFMEKEDLLHCIPEFRDFIGECKFTGCLHHREPNCAVKKAVEEGHIHKDRYNFYIKTLEEFMNRRKKKW</sequence>
<protein>
    <recommendedName>
        <fullName evidence="1">Small ribosomal subunit biogenesis GTPase RsgA</fullName>
        <ecNumber evidence="1">3.6.1.-</ecNumber>
    </recommendedName>
</protein>
<comment type="function">
    <text evidence="1">One of several proteins that assist in the late maturation steps of the functional core of the 30S ribosomal subunit. Helps release RbfA from mature subunits. May play a role in the assembly of ribosomal proteins into the subunit. Circularly permuted GTPase that catalyzes slow GTP hydrolysis, GTPase activity is stimulated by the 30S ribosomal subunit.</text>
</comment>
<comment type="cofactor">
    <cofactor evidence="1">
        <name>Zn(2+)</name>
        <dbReference type="ChEBI" id="CHEBI:29105"/>
    </cofactor>
    <text evidence="1">Binds 1 zinc ion per subunit.</text>
</comment>
<comment type="subunit">
    <text evidence="1">Monomer. Associates with 30S ribosomal subunit, binds 16S rRNA.</text>
</comment>
<comment type="subcellular location">
    <subcellularLocation>
        <location evidence="1">Cytoplasm</location>
    </subcellularLocation>
</comment>
<comment type="similarity">
    <text evidence="1">Belongs to the TRAFAC class YlqF/YawG GTPase family. RsgA subfamily.</text>
</comment>
<proteinExistence type="inferred from homology"/>
<feature type="chain" id="PRO_1000188044" description="Small ribosomal subunit biogenesis GTPase RsgA">
    <location>
        <begin position="1"/>
        <end position="292"/>
    </location>
</feature>
<feature type="domain" description="CP-type G" evidence="2">
    <location>
        <begin position="64"/>
        <end position="221"/>
    </location>
</feature>
<feature type="binding site" evidence="1">
    <location>
        <begin position="113"/>
        <end position="116"/>
    </location>
    <ligand>
        <name>GTP</name>
        <dbReference type="ChEBI" id="CHEBI:37565"/>
    </ligand>
</feature>
<feature type="binding site" evidence="1">
    <location>
        <begin position="164"/>
        <end position="172"/>
    </location>
    <ligand>
        <name>GTP</name>
        <dbReference type="ChEBI" id="CHEBI:37565"/>
    </ligand>
</feature>
<feature type="binding site" evidence="1">
    <location>
        <position position="245"/>
    </location>
    <ligand>
        <name>Zn(2+)</name>
        <dbReference type="ChEBI" id="CHEBI:29105"/>
    </ligand>
</feature>
<feature type="binding site" evidence="1">
    <location>
        <position position="250"/>
    </location>
    <ligand>
        <name>Zn(2+)</name>
        <dbReference type="ChEBI" id="CHEBI:29105"/>
    </ligand>
</feature>
<feature type="binding site" evidence="1">
    <location>
        <position position="252"/>
    </location>
    <ligand>
        <name>Zn(2+)</name>
        <dbReference type="ChEBI" id="CHEBI:29105"/>
    </ligand>
</feature>
<feature type="binding site" evidence="1">
    <location>
        <position position="258"/>
    </location>
    <ligand>
        <name>Zn(2+)</name>
        <dbReference type="ChEBI" id="CHEBI:29105"/>
    </ligand>
</feature>
<reference key="1">
    <citation type="journal article" date="2007" name="PLoS ONE">
        <title>Analysis of the neurotoxin complex genes in Clostridium botulinum A1-A4 and B1 strains: BoNT/A3, /Ba4 and /B1 clusters are located within plasmids.</title>
        <authorList>
            <person name="Smith T.J."/>
            <person name="Hill K.K."/>
            <person name="Foley B.T."/>
            <person name="Detter J.C."/>
            <person name="Munk A.C."/>
            <person name="Bruce D.C."/>
            <person name="Doggett N.A."/>
            <person name="Smith L.A."/>
            <person name="Marks J.D."/>
            <person name="Xie G."/>
            <person name="Brettin T.S."/>
        </authorList>
    </citation>
    <scope>NUCLEOTIDE SEQUENCE [LARGE SCALE GENOMIC DNA]</scope>
    <source>
        <strain>ATCC 19397 / Type A</strain>
    </source>
</reference>
<organism>
    <name type="scientific">Clostridium botulinum (strain ATCC 19397 / Type A)</name>
    <dbReference type="NCBI Taxonomy" id="441770"/>
    <lineage>
        <taxon>Bacteria</taxon>
        <taxon>Bacillati</taxon>
        <taxon>Bacillota</taxon>
        <taxon>Clostridia</taxon>
        <taxon>Eubacteriales</taxon>
        <taxon>Clostridiaceae</taxon>
        <taxon>Clostridium</taxon>
    </lineage>
</organism>
<keyword id="KW-0963">Cytoplasm</keyword>
<keyword id="KW-0342">GTP-binding</keyword>
<keyword id="KW-0378">Hydrolase</keyword>
<keyword id="KW-0479">Metal-binding</keyword>
<keyword id="KW-0547">Nucleotide-binding</keyword>
<keyword id="KW-0690">Ribosome biogenesis</keyword>
<keyword id="KW-0694">RNA-binding</keyword>
<keyword id="KW-0699">rRNA-binding</keyword>
<keyword id="KW-0862">Zinc</keyword>
<accession>A7FW69</accession>
<name>RSGA_CLOB1</name>